<dbReference type="EMBL" id="AF047047">
    <property type="protein sequence ID" value="AAC98968.1"/>
    <property type="molecule type" value="mRNA"/>
</dbReference>
<dbReference type="SMR" id="O97571"/>
<dbReference type="FunCoup" id="O97571">
    <property type="interactions" value="250"/>
</dbReference>
<dbReference type="STRING" id="9615.ENSCAFP00000021547"/>
<dbReference type="GlyCosmos" id="O97571">
    <property type="glycosylation" value="2 sites, No reported glycans"/>
</dbReference>
<dbReference type="PaxDb" id="9612-ENSCAFP00000021542"/>
<dbReference type="eggNOG" id="KOG3656">
    <property type="taxonomic scope" value="Eukaryota"/>
</dbReference>
<dbReference type="InParanoid" id="O97571"/>
<dbReference type="Proteomes" id="UP000002254">
    <property type="component" value="Unplaced"/>
</dbReference>
<dbReference type="Proteomes" id="UP000694429">
    <property type="component" value="Unplaced"/>
</dbReference>
<dbReference type="Proteomes" id="UP000694542">
    <property type="component" value="Unplaced"/>
</dbReference>
<dbReference type="Proteomes" id="UP000805418">
    <property type="component" value="Unplaced"/>
</dbReference>
<dbReference type="GO" id="GO:0009897">
    <property type="term" value="C:external side of plasma membrane"/>
    <property type="evidence" value="ECO:0000318"/>
    <property type="project" value="GO_Central"/>
</dbReference>
<dbReference type="GO" id="GO:0019957">
    <property type="term" value="F:C-C chemokine binding"/>
    <property type="evidence" value="ECO:0000318"/>
    <property type="project" value="GO_Central"/>
</dbReference>
<dbReference type="GO" id="GO:0016493">
    <property type="term" value="F:C-C chemokine receptor activity"/>
    <property type="evidence" value="ECO:0000318"/>
    <property type="project" value="GO_Central"/>
</dbReference>
<dbReference type="GO" id="GO:0016494">
    <property type="term" value="F:C-X-C chemokine receptor activity"/>
    <property type="evidence" value="ECO:0007669"/>
    <property type="project" value="InterPro"/>
</dbReference>
<dbReference type="GO" id="GO:0019959">
    <property type="term" value="F:interleukin-8 binding"/>
    <property type="evidence" value="ECO:0007669"/>
    <property type="project" value="InterPro"/>
</dbReference>
<dbReference type="GO" id="GO:0019722">
    <property type="term" value="P:calcium-mediated signaling"/>
    <property type="evidence" value="ECO:0000318"/>
    <property type="project" value="GO_Central"/>
</dbReference>
<dbReference type="GO" id="GO:0006955">
    <property type="term" value="P:immune response"/>
    <property type="evidence" value="ECO:0000318"/>
    <property type="project" value="GO_Central"/>
</dbReference>
<dbReference type="GO" id="GO:0030593">
    <property type="term" value="P:neutrophil chemotaxis"/>
    <property type="evidence" value="ECO:0000318"/>
    <property type="project" value="GO_Central"/>
</dbReference>
<dbReference type="GO" id="GO:0007204">
    <property type="term" value="P:positive regulation of cytosolic calcium ion concentration"/>
    <property type="evidence" value="ECO:0000318"/>
    <property type="project" value="GO_Central"/>
</dbReference>
<dbReference type="CDD" id="cd15178">
    <property type="entry name" value="7tmA_CXCR1_2"/>
    <property type="match status" value="1"/>
</dbReference>
<dbReference type="FunFam" id="1.20.1070.10:FF:000157">
    <property type="entry name" value="C-X-C chemokine receptor type 2"/>
    <property type="match status" value="1"/>
</dbReference>
<dbReference type="Gene3D" id="1.20.1070.10">
    <property type="entry name" value="Rhodopsin 7-helix transmembrane proteins"/>
    <property type="match status" value="1"/>
</dbReference>
<dbReference type="InterPro" id="IPR050119">
    <property type="entry name" value="CCR1-9-like"/>
</dbReference>
<dbReference type="InterPro" id="IPR000057">
    <property type="entry name" value="Chemokine_CXCR2"/>
</dbReference>
<dbReference type="InterPro" id="IPR000174">
    <property type="entry name" value="Chemokine_CXCR_1/2"/>
</dbReference>
<dbReference type="InterPro" id="IPR000276">
    <property type="entry name" value="GPCR_Rhodpsn"/>
</dbReference>
<dbReference type="InterPro" id="IPR017452">
    <property type="entry name" value="GPCR_Rhodpsn_7TM"/>
</dbReference>
<dbReference type="PANTHER" id="PTHR10489:SF689">
    <property type="entry name" value="C-X-C CHEMOKINE RECEPTOR TYPE 2"/>
    <property type="match status" value="1"/>
</dbReference>
<dbReference type="PANTHER" id="PTHR10489">
    <property type="entry name" value="CELL ADHESION MOLECULE"/>
    <property type="match status" value="1"/>
</dbReference>
<dbReference type="Pfam" id="PF00001">
    <property type="entry name" value="7tm_1"/>
    <property type="match status" value="1"/>
</dbReference>
<dbReference type="PRINTS" id="PR00237">
    <property type="entry name" value="GPCRRHODOPSN"/>
</dbReference>
<dbReference type="PRINTS" id="PR00427">
    <property type="entry name" value="INTRLEUKIN8R"/>
</dbReference>
<dbReference type="PRINTS" id="PR00573">
    <property type="entry name" value="INTRLEUKN8BR"/>
</dbReference>
<dbReference type="SUPFAM" id="SSF81321">
    <property type="entry name" value="Family A G protein-coupled receptor-like"/>
    <property type="match status" value="1"/>
</dbReference>
<dbReference type="PROSITE" id="PS00237">
    <property type="entry name" value="G_PROTEIN_RECEP_F1_1"/>
    <property type="match status" value="1"/>
</dbReference>
<dbReference type="PROSITE" id="PS50262">
    <property type="entry name" value="G_PROTEIN_RECEP_F1_2"/>
    <property type="match status" value="1"/>
</dbReference>
<organism>
    <name type="scientific">Canis lupus familiaris</name>
    <name type="common">Dog</name>
    <name type="synonym">Canis familiaris</name>
    <dbReference type="NCBI Taxonomy" id="9615"/>
    <lineage>
        <taxon>Eukaryota</taxon>
        <taxon>Metazoa</taxon>
        <taxon>Chordata</taxon>
        <taxon>Craniata</taxon>
        <taxon>Vertebrata</taxon>
        <taxon>Euteleostomi</taxon>
        <taxon>Mammalia</taxon>
        <taxon>Eutheria</taxon>
        <taxon>Laurasiatheria</taxon>
        <taxon>Carnivora</taxon>
        <taxon>Caniformia</taxon>
        <taxon>Canidae</taxon>
        <taxon>Canis</taxon>
    </lineage>
</organism>
<evidence type="ECO:0000250" key="1"/>
<evidence type="ECO:0000250" key="2">
    <source>
        <dbReference type="UniProtKB" id="P25025"/>
    </source>
</evidence>
<evidence type="ECO:0000255" key="3"/>
<evidence type="ECO:0000255" key="4">
    <source>
        <dbReference type="PROSITE-ProRule" id="PRU00521"/>
    </source>
</evidence>
<feature type="chain" id="PRO_0000069335" description="C-X-C chemokine receptor type 2">
    <location>
        <begin position="1"/>
        <end position="356"/>
    </location>
</feature>
<feature type="topological domain" description="Extracellular" evidence="3">
    <location>
        <begin position="1"/>
        <end position="46"/>
    </location>
</feature>
<feature type="transmembrane region" description="Helical; Name=1" evidence="3">
    <location>
        <begin position="47"/>
        <end position="73"/>
    </location>
</feature>
<feature type="topological domain" description="Cytoplasmic" evidence="3">
    <location>
        <begin position="74"/>
        <end position="82"/>
    </location>
</feature>
<feature type="transmembrane region" description="Helical; Name=2" evidence="3">
    <location>
        <begin position="83"/>
        <end position="103"/>
    </location>
</feature>
<feature type="topological domain" description="Extracellular" evidence="3">
    <location>
        <begin position="104"/>
        <end position="118"/>
    </location>
</feature>
<feature type="transmembrane region" description="Helical; Name=3" evidence="3">
    <location>
        <begin position="119"/>
        <end position="140"/>
    </location>
</feature>
<feature type="topological domain" description="Cytoplasmic" evidence="3">
    <location>
        <begin position="141"/>
        <end position="161"/>
    </location>
</feature>
<feature type="transmembrane region" description="Helical; Name=4" evidence="3">
    <location>
        <begin position="162"/>
        <end position="181"/>
    </location>
</feature>
<feature type="topological domain" description="Extracellular" evidence="3">
    <location>
        <begin position="182"/>
        <end position="206"/>
    </location>
</feature>
<feature type="transmembrane region" description="Helical; Name=5" evidence="3">
    <location>
        <begin position="207"/>
        <end position="229"/>
    </location>
</feature>
<feature type="topological domain" description="Cytoplasmic" evidence="3">
    <location>
        <begin position="230"/>
        <end position="249"/>
    </location>
</feature>
<feature type="transmembrane region" description="Helical; Name=6" evidence="3">
    <location>
        <begin position="250"/>
        <end position="269"/>
    </location>
</feature>
<feature type="topological domain" description="Extracellular" evidence="3">
    <location>
        <begin position="270"/>
        <end position="290"/>
    </location>
</feature>
<feature type="transmembrane region" description="Helical; Name=7" evidence="3">
    <location>
        <begin position="291"/>
        <end position="311"/>
    </location>
</feature>
<feature type="topological domain" description="Cytoplasmic" evidence="3">
    <location>
        <begin position="312"/>
        <end position="356"/>
    </location>
</feature>
<feature type="glycosylation site" description="N-linked (GlcNAc...) asparagine" evidence="3">
    <location>
        <position position="8"/>
    </location>
</feature>
<feature type="glycosylation site" description="N-linked (GlcNAc...) asparagine" evidence="3">
    <location>
        <position position="20"/>
    </location>
</feature>
<feature type="disulfide bond" evidence="4">
    <location>
        <begin position="117"/>
        <end position="194"/>
    </location>
</feature>
<accession>O97571</accession>
<name>CXCR2_CANLF</name>
<gene>
    <name type="primary">CXCR2</name>
    <name type="synonym">IL8RB</name>
</gene>
<keyword id="KW-1003">Cell membrane</keyword>
<keyword id="KW-0145">Chemotaxis</keyword>
<keyword id="KW-1015">Disulfide bond</keyword>
<keyword id="KW-0297">G-protein coupled receptor</keyword>
<keyword id="KW-0325">Glycoprotein</keyword>
<keyword id="KW-0472">Membrane</keyword>
<keyword id="KW-0597">Phosphoprotein</keyword>
<keyword id="KW-0675">Receptor</keyword>
<keyword id="KW-1185">Reference proteome</keyword>
<keyword id="KW-0807">Transducer</keyword>
<keyword id="KW-0812">Transmembrane</keyword>
<keyword id="KW-1133">Transmembrane helix</keyword>
<sequence length="356" mass="40505">MEYINWDNYSLEDLFGDIDNYTYNTEMPIIPADSAPCRPESLDINKYAVVVIYVLVFVLNLLGNSLVIMVVLYSRVSHSVTDVYLLNLAIADLLFALTLPIWAVSKVKGWIFGTPLCKIVSLLKEVNFYSGILLLASISMDRYLAIVHATRRLTQKKHWVKFICLGIWALSLILSLPIFVFRRAINPPYSSPVCYEDMGTNTTKLRIVMRALPQTFGFIVPLMIMLFCYGLTLRTLFEAHMGQKHRAMRVIFAVVLVFLLCWLPYNLVADTLMRLQAIEETCQRRNDIGRALDATEILGFFHSCLNPLIYAFIGQKFRHGLLKIMAFHGLISKEYLPKDSRPSFVGSSSANTSTTF</sequence>
<comment type="function">
    <text evidence="2">Receptor for interleukin-8 which is a powerful neutrophil chemotactic factor. Binding of IL-8 to the receptor causes activation of neutrophils. This response is mediated via a G-protein that activates a phosphatidylinositol-calcium second messenger system. Binds to IL-8 with high affinity. Also binds with high affinity to CXCL3, GRO/MGSA and NAP-2.</text>
</comment>
<comment type="subunit">
    <text evidence="2">Interacts with IL8. Interacts with GNAI2.</text>
</comment>
<comment type="subcellular location">
    <subcellularLocation>
        <location>Cell membrane</location>
        <topology>Multi-pass membrane protein</topology>
    </subcellularLocation>
</comment>
<comment type="PTM">
    <text evidence="1">Phosphorylated upon ligand binding; which is required for desensitization.</text>
</comment>
<comment type="similarity">
    <text evidence="4">Belongs to the G-protein coupled receptor 1 family.</text>
</comment>
<proteinExistence type="evidence at transcript level"/>
<reference key="1">
    <citation type="journal article" date="1999" name="DNA Seq.">
        <title>The isolation and sequence of canine interleukin-8 receptor.</title>
        <authorList>
            <person name="Chang Y.F."/>
            <person name="Novosel V."/>
            <person name="Chang C.F."/>
        </authorList>
    </citation>
    <scope>NUCLEOTIDE SEQUENCE [MRNA]</scope>
    <source>
        <strain>Beagle</strain>
    </source>
</reference>
<protein>
    <recommendedName>
        <fullName>C-X-C chemokine receptor type 2</fullName>
        <shortName>CXC-R2</shortName>
        <shortName>CXCR-2</shortName>
    </recommendedName>
    <alternativeName>
        <fullName>GRO/MGSA receptor</fullName>
    </alternativeName>
    <alternativeName>
        <fullName>High affinity interleukin-8 receptor B</fullName>
        <shortName>IL-8R B</shortName>
    </alternativeName>
    <cdAntigenName>CD182</cdAntigenName>
</protein>